<name>RBS_MANES</name>
<evidence type="ECO:0000255" key="1">
    <source>
        <dbReference type="HAMAP-Rule" id="MF_00860"/>
    </source>
</evidence>
<proteinExistence type="evidence at transcript level"/>
<sequence length="182" mass="20411">MASSMLSTATVASINRVSPAQATMVAPFTGLKSTPVFPTTRKTNSDITSITSNGGKVQCMKVWPTLGMKKFETLSYLPPLTREQLASEVEYLLRSGWIPCLEFELEHGLVYREHARVPGYYDGRYWTMWKLPMFGCTDAAQVLKELDELIKHHPDGYARIIGFDNVRQVQCISFLAYKPPGA</sequence>
<keyword id="KW-0113">Calvin cycle</keyword>
<keyword id="KW-0120">Carbon dioxide fixation</keyword>
<keyword id="KW-0150">Chloroplast</keyword>
<keyword id="KW-0601">Photorespiration</keyword>
<keyword id="KW-0602">Photosynthesis</keyword>
<keyword id="KW-0934">Plastid</keyword>
<keyword id="KW-0809">Transit peptide</keyword>
<reference key="1">
    <citation type="journal article" date="1995" name="DNA Seq.">
        <title>Sequence of cassava ribulose-1,5-bisphosphate carboxylase small subunit precursor cDNA.</title>
        <authorList>
            <person name="Mak Y.M."/>
            <person name="Ho K.K."/>
        </authorList>
    </citation>
    <scope>NUCLEOTIDE SEQUENCE [MRNA]</scope>
</reference>
<reference key="2">
    <citation type="journal article" date="1999" name="DNA Seq.">
        <title>Rubisco small subunit gene family in Cassava.</title>
        <authorList>
            <person name="Yeo T.W."/>
            <person name="Mak Y.M."/>
            <person name="Ho K.K."/>
        </authorList>
    </citation>
    <scope>NUCLEOTIDE SEQUENCE [MRNA]</scope>
    <source>
        <strain>cv. Brazil</strain>
    </source>
</reference>
<organism>
    <name type="scientific">Manihot esculenta</name>
    <name type="common">Cassava</name>
    <name type="synonym">Jatropha manihot</name>
    <dbReference type="NCBI Taxonomy" id="3983"/>
    <lineage>
        <taxon>Eukaryota</taxon>
        <taxon>Viridiplantae</taxon>
        <taxon>Streptophyta</taxon>
        <taxon>Embryophyta</taxon>
        <taxon>Tracheophyta</taxon>
        <taxon>Spermatophyta</taxon>
        <taxon>Magnoliopsida</taxon>
        <taxon>eudicotyledons</taxon>
        <taxon>Gunneridae</taxon>
        <taxon>Pentapetalae</taxon>
        <taxon>rosids</taxon>
        <taxon>fabids</taxon>
        <taxon>Malpighiales</taxon>
        <taxon>Euphorbiaceae</taxon>
        <taxon>Crotonoideae</taxon>
        <taxon>Manihoteae</taxon>
        <taxon>Manihot</taxon>
    </lineage>
</organism>
<gene>
    <name evidence="1" type="primary">RBCS</name>
</gene>
<dbReference type="EMBL" id="M96583">
    <property type="protein sequence ID" value="AAA99429.1"/>
    <property type="molecule type" value="mRNA"/>
</dbReference>
<dbReference type="EMBL" id="AF101231">
    <property type="protein sequence ID" value="AAF06099.1"/>
    <property type="molecule type" value="mRNA"/>
</dbReference>
<dbReference type="RefSeq" id="NP_001392243.1">
    <property type="nucleotide sequence ID" value="NM_001405314.1"/>
</dbReference>
<dbReference type="SMR" id="Q42915"/>
<dbReference type="EnsemblPlants" id="Manes.05G137400.1.v8.1">
    <property type="protein sequence ID" value="Manes.05G137400.1.v8.1.CDS"/>
    <property type="gene ID" value="Manes.05G137400.v8.1"/>
</dbReference>
<dbReference type="GeneID" id="110616119"/>
<dbReference type="Gramene" id="Manes.05G137400.1.v8.1">
    <property type="protein sequence ID" value="Manes.05G137400.1.v8.1.CDS"/>
    <property type="gene ID" value="Manes.05G137400.v8.1"/>
</dbReference>
<dbReference type="OMA" id="NAWIRII"/>
<dbReference type="OrthoDB" id="561at2759"/>
<dbReference type="GO" id="GO:0009507">
    <property type="term" value="C:chloroplast"/>
    <property type="evidence" value="ECO:0007669"/>
    <property type="project" value="UniProtKB-SubCell"/>
</dbReference>
<dbReference type="GO" id="GO:0016984">
    <property type="term" value="F:ribulose-bisphosphate carboxylase activity"/>
    <property type="evidence" value="ECO:0007669"/>
    <property type="project" value="UniProtKB-UniRule"/>
</dbReference>
<dbReference type="GO" id="GO:0009853">
    <property type="term" value="P:photorespiration"/>
    <property type="evidence" value="ECO:0007669"/>
    <property type="project" value="UniProtKB-KW"/>
</dbReference>
<dbReference type="GO" id="GO:0019253">
    <property type="term" value="P:reductive pentose-phosphate cycle"/>
    <property type="evidence" value="ECO:0007669"/>
    <property type="project" value="UniProtKB-UniRule"/>
</dbReference>
<dbReference type="CDD" id="cd03527">
    <property type="entry name" value="RuBisCO_small"/>
    <property type="match status" value="1"/>
</dbReference>
<dbReference type="FunFam" id="3.30.190.10:FF:000001">
    <property type="entry name" value="Ribulose bisphosphate carboxylase small chain, chloroplastic"/>
    <property type="match status" value="1"/>
</dbReference>
<dbReference type="Gene3D" id="3.30.190.10">
    <property type="entry name" value="Ribulose bisphosphate carboxylase, small subunit"/>
    <property type="match status" value="1"/>
</dbReference>
<dbReference type="HAMAP" id="MF_00859">
    <property type="entry name" value="RuBisCO_S_bact"/>
    <property type="match status" value="1"/>
</dbReference>
<dbReference type="InterPro" id="IPR024681">
    <property type="entry name" value="RuBisCO_ssu"/>
</dbReference>
<dbReference type="InterPro" id="IPR000894">
    <property type="entry name" value="RuBisCO_ssu_dom"/>
</dbReference>
<dbReference type="InterPro" id="IPR024680">
    <property type="entry name" value="RuBisCO_ssu_N"/>
</dbReference>
<dbReference type="InterPro" id="IPR036385">
    <property type="entry name" value="RuBisCO_ssu_sf"/>
</dbReference>
<dbReference type="PANTHER" id="PTHR31262">
    <property type="entry name" value="RIBULOSE BISPHOSPHATE CARBOXYLASE SMALL CHAIN 1, CHLOROPLASTIC"/>
    <property type="match status" value="1"/>
</dbReference>
<dbReference type="PANTHER" id="PTHR31262:SF19">
    <property type="entry name" value="RIBULOSE BISPHOSPHATE CARBOXYLASE SMALL SUBUNIT, CHLOROPLASTIC 2"/>
    <property type="match status" value="1"/>
</dbReference>
<dbReference type="Pfam" id="PF12338">
    <property type="entry name" value="RbcS"/>
    <property type="match status" value="1"/>
</dbReference>
<dbReference type="Pfam" id="PF00101">
    <property type="entry name" value="RuBisCO_small"/>
    <property type="match status" value="1"/>
</dbReference>
<dbReference type="PRINTS" id="PR00152">
    <property type="entry name" value="RUBISCOSMALL"/>
</dbReference>
<dbReference type="SMART" id="SM00961">
    <property type="entry name" value="RuBisCO_small"/>
    <property type="match status" value="1"/>
</dbReference>
<dbReference type="SUPFAM" id="SSF55239">
    <property type="entry name" value="RuBisCO, small subunit"/>
    <property type="match status" value="1"/>
</dbReference>
<accession>Q42915</accession>
<feature type="transit peptide" description="Chloroplast" evidence="1">
    <location>
        <begin position="1"/>
        <end position="58"/>
    </location>
</feature>
<feature type="chain" id="PRO_0000031524" description="Ribulose bisphosphate carboxylase small subunit, chloroplastic" evidence="1">
    <location>
        <begin position="59"/>
        <end position="182"/>
    </location>
</feature>
<comment type="function">
    <text evidence="1">RuBisCO catalyzes two reactions: the carboxylation of D-ribulose 1,5-bisphosphate, the primary event in carbon dioxide fixation, as well as the oxidative fragmentation of the pentose substrate. Both reactions occur simultaneously and in competition at the same active site. Although the small subunit is not catalytic it is essential for maximal activity.</text>
</comment>
<comment type="subunit">
    <text evidence="1">Heterohexadecamer of 8 large and 8 small subunits.</text>
</comment>
<comment type="subcellular location">
    <subcellularLocation>
        <location evidence="1">Plastid</location>
        <location evidence="1">Chloroplast</location>
    </subcellularLocation>
</comment>
<comment type="miscellaneous">
    <text evidence="1">The basic functional RuBisCO is composed of a large chain homodimer in a 'head-to-tail' conformation. In form I RuBisCO this homodimer is arranged in a barrel-like tetramer with the small subunits forming a tetrameric 'cap' on each end of the 'barrel'.</text>
</comment>
<comment type="similarity">
    <text evidence="1">Belongs to the RuBisCO small chain family.</text>
</comment>
<protein>
    <recommendedName>
        <fullName evidence="1">Ribulose bisphosphate carboxylase small subunit, chloroplastic</fullName>
        <shortName evidence="1">RuBisCO small subunit</shortName>
    </recommendedName>
</protein>